<dbReference type="EC" id="1.11.1.21" evidence="1"/>
<dbReference type="EMBL" id="CP000248">
    <property type="protein sequence ID" value="ABD27344.1"/>
    <property type="molecule type" value="Genomic_DNA"/>
</dbReference>
<dbReference type="RefSeq" id="WP_011446548.1">
    <property type="nucleotide sequence ID" value="NC_007794.1"/>
</dbReference>
<dbReference type="SMR" id="Q2G479"/>
<dbReference type="STRING" id="279238.Saro_2909"/>
<dbReference type="KEGG" id="nar:Saro_2909"/>
<dbReference type="eggNOG" id="COG0376">
    <property type="taxonomic scope" value="Bacteria"/>
</dbReference>
<dbReference type="HOGENOM" id="CLU_025424_2_0_5"/>
<dbReference type="Proteomes" id="UP000009134">
    <property type="component" value="Chromosome"/>
</dbReference>
<dbReference type="GO" id="GO:0005829">
    <property type="term" value="C:cytosol"/>
    <property type="evidence" value="ECO:0007669"/>
    <property type="project" value="TreeGrafter"/>
</dbReference>
<dbReference type="GO" id="GO:0004096">
    <property type="term" value="F:catalase activity"/>
    <property type="evidence" value="ECO:0007669"/>
    <property type="project" value="UniProtKB-UniRule"/>
</dbReference>
<dbReference type="GO" id="GO:0020037">
    <property type="term" value="F:heme binding"/>
    <property type="evidence" value="ECO:0007669"/>
    <property type="project" value="InterPro"/>
</dbReference>
<dbReference type="GO" id="GO:0046872">
    <property type="term" value="F:metal ion binding"/>
    <property type="evidence" value="ECO:0007669"/>
    <property type="project" value="UniProtKB-KW"/>
</dbReference>
<dbReference type="GO" id="GO:0070301">
    <property type="term" value="P:cellular response to hydrogen peroxide"/>
    <property type="evidence" value="ECO:0007669"/>
    <property type="project" value="TreeGrafter"/>
</dbReference>
<dbReference type="GO" id="GO:0042744">
    <property type="term" value="P:hydrogen peroxide catabolic process"/>
    <property type="evidence" value="ECO:0007669"/>
    <property type="project" value="UniProtKB-KW"/>
</dbReference>
<dbReference type="CDD" id="cd00649">
    <property type="entry name" value="catalase_peroxidase_1"/>
    <property type="match status" value="1"/>
</dbReference>
<dbReference type="CDD" id="cd08200">
    <property type="entry name" value="catalase_peroxidase_2"/>
    <property type="match status" value="1"/>
</dbReference>
<dbReference type="FunFam" id="1.10.420.10:FF:000002">
    <property type="entry name" value="Catalase-peroxidase"/>
    <property type="match status" value="1"/>
</dbReference>
<dbReference type="FunFam" id="1.10.420.10:FF:000004">
    <property type="entry name" value="Catalase-peroxidase"/>
    <property type="match status" value="1"/>
</dbReference>
<dbReference type="FunFam" id="1.10.520.10:FF:000002">
    <property type="entry name" value="Catalase-peroxidase"/>
    <property type="match status" value="1"/>
</dbReference>
<dbReference type="Gene3D" id="1.10.520.10">
    <property type="match status" value="2"/>
</dbReference>
<dbReference type="Gene3D" id="1.10.420.10">
    <property type="entry name" value="Peroxidase, domain 2"/>
    <property type="match status" value="2"/>
</dbReference>
<dbReference type="HAMAP" id="MF_01961">
    <property type="entry name" value="Catal_peroxid"/>
    <property type="match status" value="1"/>
</dbReference>
<dbReference type="InterPro" id="IPR000763">
    <property type="entry name" value="Catalase_peroxidase"/>
</dbReference>
<dbReference type="InterPro" id="IPR002016">
    <property type="entry name" value="Haem_peroxidase"/>
</dbReference>
<dbReference type="InterPro" id="IPR010255">
    <property type="entry name" value="Haem_peroxidase_sf"/>
</dbReference>
<dbReference type="InterPro" id="IPR019794">
    <property type="entry name" value="Peroxidases_AS"/>
</dbReference>
<dbReference type="InterPro" id="IPR019793">
    <property type="entry name" value="Peroxidases_heam-ligand_BS"/>
</dbReference>
<dbReference type="NCBIfam" id="TIGR00198">
    <property type="entry name" value="cat_per_HPI"/>
    <property type="match status" value="1"/>
</dbReference>
<dbReference type="NCBIfam" id="NF011635">
    <property type="entry name" value="PRK15061.1"/>
    <property type="match status" value="1"/>
</dbReference>
<dbReference type="PANTHER" id="PTHR30555:SF0">
    <property type="entry name" value="CATALASE-PEROXIDASE"/>
    <property type="match status" value="1"/>
</dbReference>
<dbReference type="PANTHER" id="PTHR30555">
    <property type="entry name" value="HYDROPEROXIDASE I, BIFUNCTIONAL CATALASE-PEROXIDASE"/>
    <property type="match status" value="1"/>
</dbReference>
<dbReference type="Pfam" id="PF00141">
    <property type="entry name" value="peroxidase"/>
    <property type="match status" value="2"/>
</dbReference>
<dbReference type="PRINTS" id="PR00460">
    <property type="entry name" value="BPEROXIDASE"/>
</dbReference>
<dbReference type="PRINTS" id="PR00458">
    <property type="entry name" value="PEROXIDASE"/>
</dbReference>
<dbReference type="SUPFAM" id="SSF48113">
    <property type="entry name" value="Heme-dependent peroxidases"/>
    <property type="match status" value="2"/>
</dbReference>
<dbReference type="PROSITE" id="PS00435">
    <property type="entry name" value="PEROXIDASE_1"/>
    <property type="match status" value="1"/>
</dbReference>
<dbReference type="PROSITE" id="PS00436">
    <property type="entry name" value="PEROXIDASE_2"/>
    <property type="match status" value="1"/>
</dbReference>
<dbReference type="PROSITE" id="PS50873">
    <property type="entry name" value="PEROXIDASE_4"/>
    <property type="match status" value="1"/>
</dbReference>
<name>KATG_NOVAD</name>
<protein>
    <recommendedName>
        <fullName evidence="1">Catalase-peroxidase</fullName>
        <shortName evidence="1">CP</shortName>
        <ecNumber evidence="1">1.11.1.21</ecNumber>
    </recommendedName>
    <alternativeName>
        <fullName evidence="1">Peroxidase/catalase</fullName>
    </alternativeName>
</protein>
<reference key="1">
    <citation type="submission" date="2006-01" db="EMBL/GenBank/DDBJ databases">
        <title>Complete sequence of Novosphingobium aromaticivorans DSM 12444.</title>
        <authorList>
            <consortium name="US DOE Joint Genome Institute"/>
            <person name="Copeland A."/>
            <person name="Lucas S."/>
            <person name="Lapidus A."/>
            <person name="Barry K."/>
            <person name="Detter J.C."/>
            <person name="Glavina T."/>
            <person name="Hammon N."/>
            <person name="Israni S."/>
            <person name="Pitluck S."/>
            <person name="Chain P."/>
            <person name="Malfatti S."/>
            <person name="Shin M."/>
            <person name="Vergez L."/>
            <person name="Schmutz J."/>
            <person name="Larimer F."/>
            <person name="Land M."/>
            <person name="Kyrpides N."/>
            <person name="Ivanova N."/>
            <person name="Fredrickson J."/>
            <person name="Balkwill D."/>
            <person name="Romine M.F."/>
            <person name="Richardson P."/>
        </authorList>
    </citation>
    <scope>NUCLEOTIDE SEQUENCE [LARGE SCALE GENOMIC DNA]</scope>
    <source>
        <strain>ATCC 700278 / DSM 12444 / CCUG 56034 / CIP 105152 / NBRC 16084 / F199</strain>
    </source>
</reference>
<organism>
    <name type="scientific">Novosphingobium aromaticivorans (strain ATCC 700278 / DSM 12444 / CCUG 56034 / CIP 105152 / NBRC 16084 / F199)</name>
    <dbReference type="NCBI Taxonomy" id="279238"/>
    <lineage>
        <taxon>Bacteria</taxon>
        <taxon>Pseudomonadati</taxon>
        <taxon>Pseudomonadota</taxon>
        <taxon>Alphaproteobacteria</taxon>
        <taxon>Sphingomonadales</taxon>
        <taxon>Sphingomonadaceae</taxon>
        <taxon>Novosphingobium</taxon>
    </lineage>
</organism>
<gene>
    <name evidence="1" type="primary">katG</name>
    <name type="ordered locus">Saro_2909</name>
</gene>
<feature type="signal peptide" evidence="1">
    <location>
        <begin position="1"/>
        <end position="27"/>
    </location>
</feature>
<feature type="chain" id="PRO_5000106493" description="Catalase-peroxidase">
    <location>
        <begin position="28"/>
        <end position="747"/>
    </location>
</feature>
<feature type="active site" description="Proton acceptor" evidence="1">
    <location>
        <position position="117"/>
    </location>
</feature>
<feature type="binding site" description="axial binding residue" evidence="1">
    <location>
        <position position="279"/>
    </location>
    <ligand>
        <name>heme b</name>
        <dbReference type="ChEBI" id="CHEBI:60344"/>
    </ligand>
    <ligandPart>
        <name>Fe</name>
        <dbReference type="ChEBI" id="CHEBI:18248"/>
    </ligandPart>
</feature>
<feature type="site" description="Transition state stabilizer" evidence="1">
    <location>
        <position position="113"/>
    </location>
</feature>
<feature type="cross-link" description="Tryptophyl-tyrosyl-methioninium (Trp-Tyr) (with M-264)" evidence="1">
    <location>
        <begin position="116"/>
        <end position="238"/>
    </location>
</feature>
<feature type="cross-link" description="Tryptophyl-tyrosyl-methioninium (Tyr-Met) (with W-116)" evidence="1">
    <location>
        <begin position="238"/>
        <end position="264"/>
    </location>
</feature>
<proteinExistence type="inferred from homology"/>
<keyword id="KW-0349">Heme</keyword>
<keyword id="KW-0376">Hydrogen peroxide</keyword>
<keyword id="KW-0408">Iron</keyword>
<keyword id="KW-0479">Metal-binding</keyword>
<keyword id="KW-0560">Oxidoreductase</keyword>
<keyword id="KW-0575">Peroxidase</keyword>
<keyword id="KW-1185">Reference proteome</keyword>
<keyword id="KW-0732">Signal</keyword>
<sequence length="747" mass="81101">MRKFSVSKVALLAATMAPALLPAAARAEGTAAPAATAPATPMSNRDWWPNRLDLSPLRQHGVESNPMGGKFNYAEEFKTLDLAAVKKDIEALMTTSQDWWPADYGHYGPFFIRMAWHSAGTYRTADGRGGAGGGQQRFEPLNSWPDNVNLDKARRLLWPIKQKYGRKISWADLMVLTGNVALESMGFKTFGFAGGRADDWEADQVFWGPENKWLADQRYHGDRKLQNPLAAVQMGLIYVNPEGPNGNPDPLLAAKDIRETFGRMAMNDEETVALIAGGHTFGKAHGARKPEGCVGVDPAAGAVEDQGLGWNNKCGKGNAEDTVSSGLEGAWTANPIAWTTQYLDNLYAFEWVQTRSPAGAIQWVPKEDATFVPDAHVKDKLHKPIMFTTDLALKTDPAYRKITTKFRQNPDAFADAFARAWFKLTHRDMGPRWRYLGAMVPAEELIWQDPVPKATYAMIDAADVSALKGRILATGLTGPELVRAAWASAASFRGTDMRGGTDGGRIRLAPQKDWAANNPAELARVLKALEGVATEFNRAAKDGKKVSVANLVVLGGNAAIEQAAAKAGVTVEVPFTPGRTDASQAQTDVASFEFLKPAADGFRNYYDASANRLSPSEMLVERANLLTLSVPEMTVLVGGLRALDANAGGARHGVFTDRPGTLSNDFFVNLLGMETKWQKAATDGVYEGLDRKTGKTRWTATPVDLVFGSNSELRAVSEVYGSADANAKFVNDFVAAWTKVMNLGRPS</sequence>
<comment type="function">
    <text evidence="1">Bifunctional enzyme with both catalase and broad-spectrum peroxidase activity.</text>
</comment>
<comment type="catalytic activity">
    <reaction evidence="1">
        <text>H2O2 + AH2 = A + 2 H2O</text>
        <dbReference type="Rhea" id="RHEA:30275"/>
        <dbReference type="ChEBI" id="CHEBI:13193"/>
        <dbReference type="ChEBI" id="CHEBI:15377"/>
        <dbReference type="ChEBI" id="CHEBI:16240"/>
        <dbReference type="ChEBI" id="CHEBI:17499"/>
        <dbReference type="EC" id="1.11.1.21"/>
    </reaction>
</comment>
<comment type="catalytic activity">
    <reaction evidence="1">
        <text>2 H2O2 = O2 + 2 H2O</text>
        <dbReference type="Rhea" id="RHEA:20309"/>
        <dbReference type="ChEBI" id="CHEBI:15377"/>
        <dbReference type="ChEBI" id="CHEBI:15379"/>
        <dbReference type="ChEBI" id="CHEBI:16240"/>
        <dbReference type="EC" id="1.11.1.21"/>
    </reaction>
</comment>
<comment type="cofactor">
    <cofactor evidence="1">
        <name>heme b</name>
        <dbReference type="ChEBI" id="CHEBI:60344"/>
    </cofactor>
    <text evidence="1">Binds 1 heme b (iron(II)-protoporphyrin IX) group per dimer.</text>
</comment>
<comment type="subunit">
    <text evidence="1">Homodimer or homotetramer.</text>
</comment>
<comment type="PTM">
    <text evidence="1">Formation of the three residue Trp-Tyr-Met cross-link is important for the catalase, but not the peroxidase activity of the enzyme.</text>
</comment>
<comment type="similarity">
    <text evidence="1">Belongs to the peroxidase family. Peroxidase/catalase subfamily.</text>
</comment>
<evidence type="ECO:0000255" key="1">
    <source>
        <dbReference type="HAMAP-Rule" id="MF_01961"/>
    </source>
</evidence>
<accession>Q2G479</accession>